<reference key="1">
    <citation type="journal article" date="2008" name="J. Bacteriol.">
        <title>Genome sequence of Staphylococcus aureus strain Newman and comparative analysis of staphylococcal genomes: polymorphism and evolution of two major pathogenicity islands.</title>
        <authorList>
            <person name="Baba T."/>
            <person name="Bae T."/>
            <person name="Schneewind O."/>
            <person name="Takeuchi F."/>
            <person name="Hiramatsu K."/>
        </authorList>
    </citation>
    <scope>NUCLEOTIDE SEQUENCE [LARGE SCALE GENOMIC DNA]</scope>
    <source>
        <strain>Newman</strain>
    </source>
</reference>
<organism>
    <name type="scientific">Staphylococcus aureus (strain Newman)</name>
    <dbReference type="NCBI Taxonomy" id="426430"/>
    <lineage>
        <taxon>Bacteria</taxon>
        <taxon>Bacillati</taxon>
        <taxon>Bacillota</taxon>
        <taxon>Bacilli</taxon>
        <taxon>Bacillales</taxon>
        <taxon>Staphylococcaceae</taxon>
        <taxon>Staphylococcus</taxon>
    </lineage>
</organism>
<accession>A6QJ00</accession>
<protein>
    <recommendedName>
        <fullName evidence="1">Mannitol-1-phosphate 5-dehydrogenase</fullName>
        <ecNumber evidence="1">1.1.1.17</ecNumber>
    </recommendedName>
</protein>
<dbReference type="EC" id="1.1.1.17" evidence="1"/>
<dbReference type="EMBL" id="AP009351">
    <property type="protein sequence ID" value="BAF68332.1"/>
    <property type="molecule type" value="Genomic_DNA"/>
</dbReference>
<dbReference type="RefSeq" id="WP_000648718.1">
    <property type="nucleotide sequence ID" value="NZ_JBBIAE010000008.1"/>
</dbReference>
<dbReference type="SMR" id="A6QJ00"/>
<dbReference type="KEGG" id="sae:NWMN_2060"/>
<dbReference type="HOGENOM" id="CLU_036089_2_0_9"/>
<dbReference type="Proteomes" id="UP000006386">
    <property type="component" value="Chromosome"/>
</dbReference>
<dbReference type="GO" id="GO:0005829">
    <property type="term" value="C:cytosol"/>
    <property type="evidence" value="ECO:0007669"/>
    <property type="project" value="TreeGrafter"/>
</dbReference>
<dbReference type="GO" id="GO:0008926">
    <property type="term" value="F:mannitol-1-phosphate 5-dehydrogenase activity"/>
    <property type="evidence" value="ECO:0007669"/>
    <property type="project" value="UniProtKB-UniRule"/>
</dbReference>
<dbReference type="GO" id="GO:0019592">
    <property type="term" value="P:mannitol catabolic process"/>
    <property type="evidence" value="ECO:0007669"/>
    <property type="project" value="TreeGrafter"/>
</dbReference>
<dbReference type="FunFam" id="3.40.50.720:FF:000316">
    <property type="entry name" value="Mannitol-1-phosphate 5-dehydrogenase"/>
    <property type="match status" value="1"/>
</dbReference>
<dbReference type="Gene3D" id="1.10.1040.10">
    <property type="entry name" value="N-(1-d-carboxylethyl)-l-norvaline Dehydrogenase, domain 2"/>
    <property type="match status" value="1"/>
</dbReference>
<dbReference type="Gene3D" id="3.40.50.720">
    <property type="entry name" value="NAD(P)-binding Rossmann-like Domain"/>
    <property type="match status" value="1"/>
</dbReference>
<dbReference type="HAMAP" id="MF_00196">
    <property type="entry name" value="Mannitol_dehydrog"/>
    <property type="match status" value="1"/>
</dbReference>
<dbReference type="InterPro" id="IPR008927">
    <property type="entry name" value="6-PGluconate_DH-like_C_sf"/>
</dbReference>
<dbReference type="InterPro" id="IPR013328">
    <property type="entry name" value="6PGD_dom2"/>
</dbReference>
<dbReference type="InterPro" id="IPR023028">
    <property type="entry name" value="Mannitol_1_phos_5_DH"/>
</dbReference>
<dbReference type="InterPro" id="IPR000669">
    <property type="entry name" value="Mannitol_DH"/>
</dbReference>
<dbReference type="InterPro" id="IPR013118">
    <property type="entry name" value="Mannitol_DH_C"/>
</dbReference>
<dbReference type="InterPro" id="IPR023027">
    <property type="entry name" value="Mannitol_DH_CS"/>
</dbReference>
<dbReference type="InterPro" id="IPR013131">
    <property type="entry name" value="Mannitol_DH_N"/>
</dbReference>
<dbReference type="InterPro" id="IPR036291">
    <property type="entry name" value="NAD(P)-bd_dom_sf"/>
</dbReference>
<dbReference type="NCBIfam" id="NF002645">
    <property type="entry name" value="PRK02318.1-1"/>
    <property type="match status" value="1"/>
</dbReference>
<dbReference type="NCBIfam" id="NF002652">
    <property type="entry name" value="PRK02318.2-5"/>
    <property type="match status" value="1"/>
</dbReference>
<dbReference type="PANTHER" id="PTHR30524:SF0">
    <property type="entry name" value="ALTRONATE OXIDOREDUCTASE-RELATED"/>
    <property type="match status" value="1"/>
</dbReference>
<dbReference type="PANTHER" id="PTHR30524">
    <property type="entry name" value="MANNITOL-1-PHOSPHATE 5-DEHYDROGENASE"/>
    <property type="match status" value="1"/>
</dbReference>
<dbReference type="Pfam" id="PF01232">
    <property type="entry name" value="Mannitol_dh"/>
    <property type="match status" value="1"/>
</dbReference>
<dbReference type="Pfam" id="PF08125">
    <property type="entry name" value="Mannitol_dh_C"/>
    <property type="match status" value="1"/>
</dbReference>
<dbReference type="PRINTS" id="PR00084">
    <property type="entry name" value="MTLDHDRGNASE"/>
</dbReference>
<dbReference type="SUPFAM" id="SSF48179">
    <property type="entry name" value="6-phosphogluconate dehydrogenase C-terminal domain-like"/>
    <property type="match status" value="1"/>
</dbReference>
<dbReference type="SUPFAM" id="SSF51735">
    <property type="entry name" value="NAD(P)-binding Rossmann-fold domains"/>
    <property type="match status" value="1"/>
</dbReference>
<dbReference type="PROSITE" id="PS00974">
    <property type="entry name" value="MANNITOL_DHGENASE"/>
    <property type="match status" value="1"/>
</dbReference>
<evidence type="ECO:0000255" key="1">
    <source>
        <dbReference type="HAMAP-Rule" id="MF_00196"/>
    </source>
</evidence>
<gene>
    <name evidence="1" type="primary">mtlD</name>
    <name type="ordered locus">NWMN_2060</name>
</gene>
<keyword id="KW-0520">NAD</keyword>
<keyword id="KW-0560">Oxidoreductase</keyword>
<feature type="chain" id="PRO_1000071711" description="Mannitol-1-phosphate 5-dehydrogenase">
    <location>
        <begin position="1"/>
        <end position="368"/>
    </location>
</feature>
<feature type="binding site" evidence="1">
    <location>
        <begin position="3"/>
        <end position="14"/>
    </location>
    <ligand>
        <name>NAD(+)</name>
        <dbReference type="ChEBI" id="CHEBI:57540"/>
    </ligand>
</feature>
<sequence>MKAVHFGAGNIGRGFIGYILADNNVKVTFADVNEEIINALAHDHQYDVILADESKTTTRVNNVDAINSMQPSEALKQAILEADIITTAVGVNILPIIAKSFAPFLKEKTNHVNIVACENAIMATDTLKKAVLDITGPLGNNIHFANSAVDRIVPLQKNENILDVMVEPFYEWVVEKDAWYGPELNHIKYVDDLTPYIERKLLTVNTGHAYLAYAGKFAGKATVLDAVEDSSIEAGLRRVLAETSQYITNEFDFTEAEQAAYVEKIIDRFNNSYLSDEVTRVGRGTLRKIGPKDRIIKPLTYLYNKDLERTGLLNTAALLLKYDDTADQETVEKNNYIKEHGLKAFLSEYAKVDDGLADEIIEAYNSLS</sequence>
<comment type="catalytic activity">
    <reaction evidence="1">
        <text>D-mannitol 1-phosphate + NAD(+) = beta-D-fructose 6-phosphate + NADH + H(+)</text>
        <dbReference type="Rhea" id="RHEA:19661"/>
        <dbReference type="ChEBI" id="CHEBI:15378"/>
        <dbReference type="ChEBI" id="CHEBI:57540"/>
        <dbReference type="ChEBI" id="CHEBI:57634"/>
        <dbReference type="ChEBI" id="CHEBI:57945"/>
        <dbReference type="ChEBI" id="CHEBI:61381"/>
        <dbReference type="EC" id="1.1.1.17"/>
    </reaction>
</comment>
<comment type="similarity">
    <text evidence="1">Belongs to the mannitol dehydrogenase family.</text>
</comment>
<proteinExistence type="inferred from homology"/>
<name>MTLD_STAAE</name>